<gene>
    <name type="primary">Apc</name>
</gene>
<sequence>MAAASYDQLLKQVEALKMENSNLRQELEDNSNHLTKLETEASNMKEVLKQLQGSIEDETMTSGQIDLLERLKEFNLDSNFPGVKLRSKMSLRSYGSREGSVSSRSGECSPVPMGSFPRRTFVNGSRESTGYLEELEKERSLLLADLDKEEKEKDWYYAQLQNLTKRIDSLPLTENFSLQTDMTRRQLEYEARQIRAAMEEQLGTCQDMEKRAQRRIARIQQIEKDILRVRQLLQSQAAEAERSSQSRHDAASHEAGRQHEGHGVAESNTAASSSGQSPATRVDHETASVLSSSGTHSAPRRLTSHLGTKVEMVYSLLSMLGTHDKDDMSRTLLAMSSSQDSCISMRQSGCLPLLIQLLHGNDKDSVLLGNSRGSKEARARASAALHNIIHSQPDDKRGRREIRVLHLLEQIRAYCETCWEWQEAHEQGMDQDKNPMPAPVEHQICPAVCVLMKLSFDEEHRHAMNELGGLQAIAELLQVDCEMYGLTNDHYSVTLRRYAGMALTNLTFGDVANKATLCSMKGCMRALVAQLKSESEDLQQVIASVLRNLSWRADVNSKKTLREVGSVKALMECALEVKKESTLKSVLSALWNLSAHCTENKADICAVDGALAFLVGTLTYRSQTNTLAIIESGGGILRNVSSLIATNEDHRQILRENNCLQTLLQHLKSHSLTIVSNACGTLWNLSARNPKDQEALWDMGAVSMLKNLIHSKHKMIAMGSAAALRNLMANRPAKYKDANIMSPGSSLPSLHVRKQKALEAELDAQHLSETFDNIDNLSPKASHRSKQRHKQNLYGDYAFDANRHDDSRSDNFNTGNMTVLSPYLNTTVLPSSSSSRGSLDSSRSEKDRSLERERGIGLSAYHPTTENAGTSSKRGLQITTTAAQIAKVMEEVSAIHTSQDDRSSASTTEFHCVADDRSAARRSSASHTHSNTYNFTKSENSNRTCSMPYAKVEYKRSSNDSLNSVTSSDGYGKRGQMKPSVESYSEDDESKFCSYGQYPADLAHKIHSANHMDDNDGELDTPINYSLKYSDEQLNSGRQSPSQNERWARPKHVIEDEIKQNEQRQARSQNTSYPVYSENTDDKHLKFQPHFGQQECVSPYRSRGTSGSETNRMGSSHAINQNVNQSLCQEDDYEDDKPTNYSERYSEEEQHEEEEERPTNYSIKYNEEKHHVDQPIDYSLKYATDISSSQKPSFSFSKNSSAQSTKPEHLSPSSENTAVPPSNAKRQNQLRPSSAQRNGQTQKGTTCKVPSINQETIQTYCVEDTPICFSRCSSLSSLSSADDEIGCDQTTQEADSANTLQTAEVKENDVTRSAEDPATEVPAVSQNARAKPSRLQASGLSSESTRHNKAVEFSSGAKSPSKSGAQTPKSPPEHYVQETPLVFSRCTSVSSLDSFESRSIASSVQSEPCSGMVSGIISPSDLPDSPGQTMPPSRSKTPPPPPQTVQAKREVPKSKVPAAEKRESGPKQTAVNAAVQRVQVLPDVDTLLHFATESTPDGFSCSSSLSALSLDEPFIQKDVELRIMPPVQENDNGNETESEQPEESNENQDKEVEKPDSEKDLLDDSDDDDIEILEECIISAMPTKSSRKAKKLAQTASKLPPPVARKPSQLPVYKLLPAQNRLQAQKHVSFTPGDDVPRVYCVEGTPINFSTATSLSDLTIESPPNELATGDGVRAGIQSGEFEKRDTIPTEGRSTDDAQRGKISSIVTPDLDDNKAEEGDILAECINSAMPKGKSHKPFRVKKIMDQVQQASSTSSGANKNQVDTKKKKPTSPVKPMPQNTEYRTRVRKNTDSKVNVNTEETFSDNKDSKKPSLQTNAKAFNEKLPNNEDRVRGTFALDSPHHYTPIEGTPYCFSRNDSLSSLDFDDDDVDLSREKAELRKGKESKDSEAKVTCRPEPNSSQQAASKSQASIKHPANRAQSKPVLQKQPTFPQSSKDGPDRGAATDEKLQNLAIENTPVCFSRNSSLSSLSDIDQENNNNKESEPIKEAEPANSQGEPSKPQASGYAPKSFHVEDTPVCFSRNSSLSSLSIDSEDDLLQECISSAMPKKKRPSRLKSESEKQSPRKVGGILAEDLTLDLKDLQRPDSEHAFSPGSENFDWKAIQEGANSIVSSLHQAAAAAACLSRQASSDSDSILSLKSGISLGSPFHLTPDQEEKPFTSNKGPRILKPGEKSTLEAKKIESENKGIKGGKKVYKSLITGKIRSNSEISSQMKQPLPTNMPSISRGRTMIHIPGLRNSSSSTSPVSKKGPPLKTPASKSPSEGPGATTSPRGTKPAGKSELSPITRQTSQISGSNKGSSRSGSRDSTPSRPTQQPLSRPMQSPGRNSISPGRNGISPPNKLSQLPRTSSPSTASTKSSGSGKMSYTSPGRQLSQQNLTKQASLSKNASSIPRSESASKGLNQMSNGNGSNKKVELSRMSSTKSSGSESDSSERPALVRQSTFIKEAPSPTLRRKLEESASFESLSPSSRPDSPTRSQAQTPVLSPSLPDMSLSTHPSVQAGGWRKLPPNLSPTIEYNDGRPTKRHDIARSHSESPSRLPINRAGTWKREHSKHSSSLPRVSTWRRTGSSSSILSASSESSEKAKSEDERHVSSMPAPRQMKENQVPTKGTWRKIKESDISPTGMASQSASSGAASGAESKPLIYQMAPPVSKTEDVWVRIEDCPINNPRSGRSPTGNTPPVIDSVSEKGSSSIKDSKDSKDTHGKQSVGSGSPVQTVGLETRLNSFVQVEAPEQKGTEAKPGQSNPVSIAETAETCIAERTPFSSSSSSKHSSPSGTVAARVTPFNYNPSPRKSSADSTSARPSQIPTPVSTNTKKRDSKTDITESSGAQSPKRHSGSYLVTSV</sequence>
<name>APC_MOUSE</name>
<feature type="initiator methionine" description="Removed" evidence="2">
    <location>
        <position position="1"/>
    </location>
</feature>
<feature type="chain" id="PRO_0000064628" description="Adenomatous polyposis coli protein">
    <location>
        <begin position="2"/>
        <end position="2845"/>
    </location>
</feature>
<feature type="repeat" description="ARM 1">
    <location>
        <begin position="451"/>
        <end position="493"/>
    </location>
</feature>
<feature type="repeat" description="ARM 2">
    <location>
        <begin position="503"/>
        <end position="545"/>
    </location>
</feature>
<feature type="repeat" description="ARM 3">
    <location>
        <begin position="546"/>
        <end position="589"/>
    </location>
</feature>
<feature type="repeat" description="ARM 4">
    <location>
        <begin position="590"/>
        <end position="636"/>
    </location>
</feature>
<feature type="repeat" description="ARM 5">
    <location>
        <begin position="637"/>
        <end position="681"/>
    </location>
</feature>
<feature type="repeat" description="ARM 6">
    <location>
        <begin position="682"/>
        <end position="723"/>
    </location>
</feature>
<feature type="repeat" description="ARM 7">
    <location>
        <begin position="724"/>
        <end position="765"/>
    </location>
</feature>
<feature type="region of interest" description="Disordered" evidence="5">
    <location>
        <begin position="238"/>
        <end position="304"/>
    </location>
</feature>
<feature type="region of interest" description="Disordered" evidence="5">
    <location>
        <begin position="828"/>
        <end position="873"/>
    </location>
</feature>
<feature type="region of interest" description="Disordered" evidence="5">
    <location>
        <begin position="921"/>
        <end position="942"/>
    </location>
</feature>
<feature type="region of interest" description="Disordered" evidence="5">
    <location>
        <begin position="956"/>
        <end position="986"/>
    </location>
</feature>
<feature type="region of interest" description="Interaction with catenins" evidence="2">
    <location>
        <begin position="1018"/>
        <end position="1168"/>
    </location>
</feature>
<feature type="region of interest" description="Disordered" evidence="5">
    <location>
        <begin position="1058"/>
        <end position="1079"/>
    </location>
</feature>
<feature type="region of interest" description="Disordered" evidence="5">
    <location>
        <begin position="1092"/>
        <end position="1168"/>
    </location>
</feature>
<feature type="region of interest" description="Disordered" evidence="5">
    <location>
        <begin position="1189"/>
        <end position="1247"/>
    </location>
</feature>
<feature type="region of interest" description="Disordered" evidence="5">
    <location>
        <begin position="1307"/>
        <end position="1375"/>
    </location>
</feature>
<feature type="region of interest" description="Disordered" evidence="5">
    <location>
        <begin position="1400"/>
        <end position="1474"/>
    </location>
</feature>
<feature type="region of interest" description="Disordered" evidence="5">
    <location>
        <begin position="1525"/>
        <end position="1568"/>
    </location>
</feature>
<feature type="region of interest" description="Disordered" evidence="5">
    <location>
        <begin position="1587"/>
        <end position="1606"/>
    </location>
</feature>
<feature type="region of interest" description="Disordered" evidence="5">
    <location>
        <begin position="1746"/>
        <end position="2010"/>
    </location>
</feature>
<feature type="region of interest" description="Highly charged">
    <location>
        <begin position="1864"/>
        <end position="1891"/>
    </location>
</feature>
<feature type="region of interest" description="Interaction with AXIN1" evidence="2">
    <location>
        <begin position="2034"/>
        <end position="2058"/>
    </location>
</feature>
<feature type="region of interest" description="Disordered" evidence="5">
    <location>
        <begin position="2042"/>
        <end position="2069"/>
    </location>
</feature>
<feature type="region of interest" description="Disordered" evidence="5">
    <location>
        <begin position="2146"/>
        <end position="2190"/>
    </location>
</feature>
<feature type="region of interest" description="Basic region" evidence="2">
    <location>
        <begin position="2167"/>
        <end position="2674"/>
    </location>
</feature>
<feature type="region of interest" description="Disordered" evidence="5">
    <location>
        <begin position="2202"/>
        <end position="2652"/>
    </location>
</feature>
<feature type="region of interest" description="Interaction with DLG1" evidence="2">
    <location>
        <begin position="2475"/>
        <end position="2845"/>
    </location>
</feature>
<feature type="region of interest" description="Disordered" evidence="5">
    <location>
        <begin position="2664"/>
        <end position="2845"/>
    </location>
</feature>
<feature type="region of interest" description="Interaction with MAPRE1" evidence="6">
    <location>
        <begin position="2674"/>
        <end position="2845"/>
    </location>
</feature>
<feature type="coiled-coil region" evidence="4">
    <location>
        <begin position="2"/>
        <end position="61"/>
    </location>
</feature>
<feature type="coiled-coil region" evidence="4">
    <location>
        <begin position="125"/>
        <end position="245"/>
    </location>
</feature>
<feature type="short sequence motif" description="Microtubule tip localization signal">
    <location>
        <begin position="2805"/>
        <end position="2808"/>
    </location>
</feature>
<feature type="short sequence motif" description="PDZ-binding" evidence="1">
    <location>
        <begin position="2843"/>
        <end position="2845"/>
    </location>
</feature>
<feature type="compositionally biased region" description="Basic and acidic residues" evidence="5">
    <location>
        <begin position="239"/>
        <end position="263"/>
    </location>
</feature>
<feature type="compositionally biased region" description="Polar residues" evidence="5">
    <location>
        <begin position="266"/>
        <end position="279"/>
    </location>
</feature>
<feature type="compositionally biased region" description="Low complexity" evidence="5">
    <location>
        <begin position="831"/>
        <end position="841"/>
    </location>
</feature>
<feature type="compositionally biased region" description="Basic and acidic residues" evidence="5">
    <location>
        <begin position="842"/>
        <end position="855"/>
    </location>
</feature>
<feature type="compositionally biased region" description="Polar residues" evidence="5">
    <location>
        <begin position="862"/>
        <end position="873"/>
    </location>
</feature>
<feature type="compositionally biased region" description="Polar residues" evidence="5">
    <location>
        <begin position="927"/>
        <end position="942"/>
    </location>
</feature>
<feature type="compositionally biased region" description="Low complexity" evidence="5">
    <location>
        <begin position="959"/>
        <end position="969"/>
    </location>
</feature>
<feature type="compositionally biased region" description="Polar residues" evidence="5">
    <location>
        <begin position="1066"/>
        <end position="1078"/>
    </location>
</feature>
<feature type="compositionally biased region" description="Polar residues" evidence="5">
    <location>
        <begin position="1103"/>
        <end position="1128"/>
    </location>
</feature>
<feature type="compositionally biased region" description="Low complexity" evidence="5">
    <location>
        <begin position="1189"/>
        <end position="1204"/>
    </location>
</feature>
<feature type="compositionally biased region" description="Polar residues" evidence="5">
    <location>
        <begin position="1211"/>
        <end position="1245"/>
    </location>
</feature>
<feature type="compositionally biased region" description="Low complexity" evidence="5">
    <location>
        <begin position="1354"/>
        <end position="1365"/>
    </location>
</feature>
<feature type="compositionally biased region" description="Basic and acidic residues" evidence="5">
    <location>
        <begin position="1447"/>
        <end position="1465"/>
    </location>
</feature>
<feature type="compositionally biased region" description="Acidic residues" evidence="5">
    <location>
        <begin position="1532"/>
        <end position="1546"/>
    </location>
</feature>
<feature type="compositionally biased region" description="Basic and acidic residues" evidence="5">
    <location>
        <begin position="1547"/>
        <end position="1562"/>
    </location>
</feature>
<feature type="compositionally biased region" description="Polar residues" evidence="5">
    <location>
        <begin position="1747"/>
        <end position="1762"/>
    </location>
</feature>
<feature type="compositionally biased region" description="Basic and acidic residues" evidence="5">
    <location>
        <begin position="1783"/>
        <end position="1792"/>
    </location>
</feature>
<feature type="compositionally biased region" description="Basic and acidic residues" evidence="5">
    <location>
        <begin position="1871"/>
        <end position="1894"/>
    </location>
</feature>
<feature type="compositionally biased region" description="Low complexity" evidence="5">
    <location>
        <begin position="1900"/>
        <end position="1911"/>
    </location>
</feature>
<feature type="compositionally biased region" description="Polar residues" evidence="5">
    <location>
        <begin position="1927"/>
        <end position="1936"/>
    </location>
</feature>
<feature type="compositionally biased region" description="Basic and acidic residues" evidence="5">
    <location>
        <begin position="1937"/>
        <end position="1949"/>
    </location>
</feature>
<feature type="compositionally biased region" description="Basic and acidic residues" evidence="5">
    <location>
        <begin position="1979"/>
        <end position="1990"/>
    </location>
</feature>
<feature type="compositionally biased region" description="Basic and acidic residues" evidence="5">
    <location>
        <begin position="2169"/>
        <end position="2187"/>
    </location>
</feature>
<feature type="compositionally biased region" description="Polar residues" evidence="5">
    <location>
        <begin position="2203"/>
        <end position="2223"/>
    </location>
</feature>
<feature type="compositionally biased region" description="Polar residues" evidence="5">
    <location>
        <begin position="2257"/>
        <end position="2272"/>
    </location>
</feature>
<feature type="compositionally biased region" description="Low complexity" evidence="5">
    <location>
        <begin position="2290"/>
        <end position="2311"/>
    </location>
</feature>
<feature type="compositionally biased region" description="Polar residues" evidence="5">
    <location>
        <begin position="2312"/>
        <end position="2331"/>
    </location>
</feature>
<feature type="compositionally biased region" description="Low complexity" evidence="5">
    <location>
        <begin position="2348"/>
        <end position="2369"/>
    </location>
</feature>
<feature type="compositionally biased region" description="Polar residues" evidence="5">
    <location>
        <begin position="2370"/>
        <end position="2411"/>
    </location>
</feature>
<feature type="compositionally biased region" description="Low complexity" evidence="5">
    <location>
        <begin position="2417"/>
        <end position="2429"/>
    </location>
</feature>
<feature type="compositionally biased region" description="Low complexity" evidence="5">
    <location>
        <begin position="2459"/>
        <end position="2477"/>
    </location>
</feature>
<feature type="compositionally biased region" description="Basic and acidic residues" evidence="5">
    <location>
        <begin position="2518"/>
        <end position="2535"/>
    </location>
</feature>
<feature type="compositionally biased region" description="Polar residues" evidence="5">
    <location>
        <begin position="2555"/>
        <end position="2568"/>
    </location>
</feature>
<feature type="compositionally biased region" description="Low complexity" evidence="5">
    <location>
        <begin position="2569"/>
        <end position="2579"/>
    </location>
</feature>
<feature type="compositionally biased region" description="Basic and acidic residues" evidence="5">
    <location>
        <begin position="2580"/>
        <end position="2592"/>
    </location>
</feature>
<feature type="compositionally biased region" description="Low complexity" evidence="5">
    <location>
        <begin position="2626"/>
        <end position="2638"/>
    </location>
</feature>
<feature type="compositionally biased region" description="Polar residues" evidence="5">
    <location>
        <begin position="2668"/>
        <end position="2679"/>
    </location>
</feature>
<feature type="compositionally biased region" description="Low complexity" evidence="5">
    <location>
        <begin position="2684"/>
        <end position="2694"/>
    </location>
</feature>
<feature type="compositionally biased region" description="Basic and acidic residues" evidence="5">
    <location>
        <begin position="2695"/>
        <end position="2705"/>
    </location>
</feature>
<feature type="compositionally biased region" description="Polar residues" evidence="5">
    <location>
        <begin position="2706"/>
        <end position="2716"/>
    </location>
</feature>
<feature type="compositionally biased region" description="Low complexity" evidence="5">
    <location>
        <begin position="2765"/>
        <end position="2776"/>
    </location>
</feature>
<feature type="compositionally biased region" description="Polar residues" evidence="5">
    <location>
        <begin position="2786"/>
        <end position="2814"/>
    </location>
</feature>
<feature type="modified residue" description="N-acetylalanine" evidence="2">
    <location>
        <position position="2"/>
    </location>
</feature>
<feature type="modified residue" description="Phosphoserine" evidence="11">
    <location>
        <position position="105"/>
    </location>
</feature>
<feature type="modified residue" description="Phosphoserine" evidence="11">
    <location>
        <position position="109"/>
    </location>
</feature>
<feature type="modified residue" description="Phosphoserine" evidence="2">
    <location>
        <position position="742"/>
    </location>
</feature>
<feature type="modified residue" description="Phosphoserine" evidence="2">
    <location>
        <position position="746"/>
    </location>
</feature>
<feature type="modified residue" description="Phosphoserine" evidence="11">
    <location>
        <position position="778"/>
    </location>
</feature>
<feature type="modified residue" description="Phosphoserine" evidence="2">
    <location>
        <position position="906"/>
    </location>
</feature>
<feature type="modified residue" description="Phosphoserine" evidence="3">
    <location>
        <position position="985"/>
    </location>
</feature>
<feature type="modified residue" description="Phosphoserine" evidence="11">
    <location>
        <position position="1036"/>
    </location>
</feature>
<feature type="modified residue" description="Phosphoserine" evidence="2">
    <location>
        <position position="1040"/>
    </location>
</feature>
<feature type="modified residue" description="Phosphoserine" evidence="2">
    <location>
        <position position="1359"/>
    </location>
</feature>
<feature type="modified residue" description="Phosphoserine" evidence="11">
    <location>
        <position position="1370"/>
    </location>
</feature>
<feature type="modified residue" description="Phosphoserine" evidence="2">
    <location>
        <position position="1384"/>
    </location>
</feature>
<feature type="modified residue" description="Phosphoserine" evidence="11">
    <location>
        <position position="1391"/>
    </location>
</feature>
<feature type="modified residue" description="Phosphoserine" evidence="11">
    <location>
        <position position="1394"/>
    </location>
</feature>
<feature type="modified residue" description="Phosphothreonine" evidence="11">
    <location>
        <position position="1437"/>
    </location>
</feature>
<feature type="modified residue" description="Phosphoserine" evidence="3">
    <location>
        <position position="1565"/>
    </location>
</feature>
<feature type="modified residue" description="Phosphoserine" evidence="11">
    <location>
        <position position="1772"/>
    </location>
</feature>
<feature type="modified residue" description="Phosphoserine" evidence="11">
    <location>
        <position position="1859"/>
    </location>
</feature>
<feature type="modified residue" description="Phosphoserine" evidence="2">
    <location>
        <position position="1861"/>
    </location>
</feature>
<feature type="modified residue" description="Phosphoserine" evidence="11">
    <location>
        <position position="1862"/>
    </location>
</feature>
<feature type="modified residue" description="Phosphoserine" evidence="11">
    <location>
        <position position="1969"/>
    </location>
</feature>
<feature type="modified residue" description="Phosphoserine" evidence="11">
    <location>
        <position position="1971"/>
    </location>
</feature>
<feature type="modified residue" description="Phosphoserine" evidence="3">
    <location>
        <position position="2087"/>
    </location>
</feature>
<feature type="modified residue" description="Phosphoserine" evidence="3">
    <location>
        <position position="2092"/>
    </location>
</feature>
<feature type="modified residue" description="Phosphoserine" evidence="11">
    <location>
        <position position="2125"/>
    </location>
</feature>
<feature type="modified residue" description="Phosphoserine" evidence="3">
    <location>
        <position position="2129"/>
    </location>
</feature>
<feature type="modified residue" description="Phosphoserine" evidence="3">
    <location>
        <position position="2130"/>
    </location>
</feature>
<feature type="modified residue" description="Phosphoserine" evidence="3">
    <location>
        <position position="2132"/>
    </location>
</feature>
<feature type="modified residue" description="Phosphothreonine" evidence="11">
    <location>
        <position position="2151"/>
    </location>
</feature>
<feature type="modified residue" description="Phosphoserine" evidence="2">
    <location>
        <position position="2260"/>
    </location>
</feature>
<feature type="modified residue" description="Phosphoserine" evidence="2">
    <location>
        <position position="2270"/>
    </location>
</feature>
<feature type="modified residue" description="Phosphoserine" evidence="2">
    <location>
        <position position="2283"/>
    </location>
</feature>
<feature type="modified residue" description="Phosphoserine" evidence="2">
    <location>
        <position position="2473"/>
    </location>
</feature>
<feature type="modified residue" description="Phosphoserine" evidence="2">
    <location>
        <position position="2535"/>
    </location>
</feature>
<feature type="modified residue" description="Phosphoserine" evidence="2">
    <location>
        <position position="2569"/>
    </location>
</feature>
<feature type="modified residue" description="Phosphoserine" evidence="2">
    <location>
        <position position="2671"/>
    </location>
</feature>
<feature type="modified residue" description="Phosphoserine" evidence="11">
    <location>
        <position position="2674"/>
    </location>
</feature>
<feature type="modified residue" description="Phosphothreonine" evidence="2">
    <location>
        <position position="2679"/>
    </location>
</feature>
<feature type="modified residue" description="Phosphoserine" evidence="3">
    <location>
        <position position="2713"/>
    </location>
</feature>
<feature type="modified residue" description="Phosphoserine" evidence="11">
    <location>
        <position position="2726"/>
    </location>
</feature>
<feature type="modified residue" description="Phosphoserine" evidence="2">
    <location>
        <position position="2791"/>
    </location>
</feature>
<feature type="splice variant" id="VSP_004116" description="In isoform 2 and isoform 4." evidence="9">
    <location>
        <begin position="243"/>
        <end position="276"/>
    </location>
</feature>
<feature type="splice variant" id="VSP_004117" description="In isoform 3 and isoform 4." evidence="10">
    <location>
        <begin position="310"/>
        <end position="410"/>
    </location>
</feature>
<feature type="sequence variant" description="In strain: CAST/Ei.">
    <original>T</original>
    <variation>A</variation>
    <location>
        <position position="120"/>
    </location>
</feature>
<feature type="sequence variant" description="In strain: CAST/Ei.">
    <original>V</original>
    <variation>I</variation>
    <location>
        <position position="493"/>
    </location>
</feature>
<feature type="sequence variant" description="In strain: CAST/Ei.">
    <original>Y</original>
    <variation>F</variation>
    <location>
        <position position="797"/>
    </location>
</feature>
<feature type="sequence variant" description="In strain: CAST/Ei.">
    <original>A</original>
    <variation>T</variation>
    <location>
        <position position="1330"/>
    </location>
</feature>
<feature type="sequence variant" description="In strain: CAST/Ei.">
    <original>A</original>
    <variation>S</variation>
    <location>
        <position position="1618"/>
    </location>
</feature>
<feature type="sequence variant" description="In strain: CAST/Ei.">
    <original>G</original>
    <variation>A</variation>
    <location>
        <position position="2294"/>
    </location>
</feature>
<feature type="sequence variant" description="In strain: CAST/Ei.">
    <original>H</original>
    <variation>Q</variation>
    <location>
        <position position="2496"/>
    </location>
</feature>
<feature type="sequence variant" description="In strain: CAST/Ei.">
    <original>T</original>
    <variation>A</variation>
    <location>
        <position position="2523"/>
    </location>
</feature>
<feature type="sequence variant" description="In strain: CAST/Ei.">
    <original>T</original>
    <variation>S</variation>
    <location>
        <position position="2813"/>
    </location>
</feature>
<comment type="function">
    <text evidence="2 6 8">Tumor suppressor. Promotes rapid degradation of CTNNB1 and participates in Wnt signaling as a negative regulator. APC activity is correlated with its phosphorylation state. Activates the GEF activity of SPATA13 and ARHGEF4. Plays a role in hepatocyte growth factor (HGF)-induced cell migration (By similarity). Required for MMP9 up-regulation via the JNK signaling pathway in colorectal tumor cells (PubMed:19893577). Associates with both microtubules and actin filaments, components of the cytoskeleton (By similarity). Plays a role in mediating the organization of F-actin into ordered bundles (By similarity). Functions downstream of Rho GTPases and DIAPH1 to selectively stabilize microtubules (PubMed:15311282). Acts as a mediator of ERBB2-dependent stabilization of microtubules at the cell cortex. It is required for the localization of MACF1 to the cell membrane and this localization of MACF1 is critical for its function in microtubule stabilization (By similarity).</text>
</comment>
<comment type="subunit">
    <text evidence="2 3 6 7 10">Forms homooligomers (Probable). Found in a complex consisting of ARHGEF4, APC and CTNNB1 (By similarity). Found in a complex composed of MACF1, APC, AXIN1, CTNNB1 and GSK3B (By similarity). The complex composed, at least, of APC, CTNNB1 and GSK3B interacts with JPT1; the interaction requires the inactive form of GSK3B (phosphorylated at 'Ser-9') (By similarity). Interacts with APC2 (By similarity). Interacts with DLG1 (via PDZ domains) and DLG3 (via PDZ domains) (By similarity). Interacts with alpha- and beta-catenins (By similarity). Interacts with AXIN1 (via RGS domain) (By similarity). Interacts with ARHGEF4 (via N-terminus) (By similarity). Interacts (via C-terminal residues 2674-2843) with MAPRE1 (via C-terminal residues 206-211); the interaction inhibits association with and bundling of F-actin (PubMed:15311282). Interacts with MAPRE2 and MAPRE3 (via C-terminus) (By similarity). Interacts with DIAPH1; DIAPH1 acts as a scaffold protein for MAPRE1 and APC to stabilize microtubules and promote cell migration (PubMed:15311282). Interacts with DIAPH2 (PubMed:15311282). Interacts with SCRIB; may mediate targeting to adherens junctions of epithelial cells (PubMed:16611247). Interacts with SPATA13 (via N-terminus and SH3 domain) (By similarity). Interacts with ASAP1 (via SH3 domain) (By similarity). Interacts (at the cell membrane) with AMER1 and AMER2 (via ARM repeats) (By similarity). Interacts with KHDRBS1 (By similarity). Interacts with actin; binds both to F-actin and actin filament bundles (By similarity).</text>
</comment>
<comment type="subcellular location">
    <subcellularLocation>
        <location evidence="2">Cell junction</location>
        <location evidence="2">Adherens junction</location>
    </subcellularLocation>
    <subcellularLocation>
        <location evidence="2">Cytoplasm</location>
        <location evidence="2">Cytoskeleton</location>
    </subcellularLocation>
    <subcellularLocation>
        <location evidence="2">Cell projection</location>
        <location evidence="2">Lamellipodium</location>
    </subcellularLocation>
    <subcellularLocation>
        <location evidence="2">Cell projection</location>
        <location evidence="2">Ruffle membrane</location>
    </subcellularLocation>
    <subcellularLocation>
        <location evidence="2">Cytoplasm</location>
    </subcellularLocation>
    <subcellularLocation>
        <location evidence="2">Cell membrane</location>
    </subcellularLocation>
    <text evidence="2">Associated with the microtubule network at the growing distal tip of microtubules. MAPRE1 may be required for targeting to the growing microtubule plus ends. Accumulates in the lamellipodium and ruffle membrane in response to hepatocyte growth factor (HGF) treatment. The MEMO1-RHOA-DIAPH1 signaling pathway controls localization of the phosphorylated form to the cell membrane.</text>
</comment>
<comment type="alternative products">
    <event type="alternative splicing"/>
    <isoform>
        <id>Q61315-1</id>
        <name>1</name>
        <sequence type="displayed"/>
    </isoform>
    <isoform>
        <id>Q61315-2</id>
        <name>2</name>
        <sequence type="described" ref="VSP_004116"/>
    </isoform>
    <isoform>
        <id>Q61315-3</id>
        <name>3</name>
        <sequence type="described" ref="VSP_004117"/>
    </isoform>
    <isoform>
        <id>Q61315-4</id>
        <name>4</name>
        <sequence type="described" ref="VSP_004116 VSP_004117"/>
    </isoform>
</comment>
<comment type="tissue specificity">
    <text>Expressed in liver, spleen, kidney, heart, lung, brain, stomach, intestine, testis and ovary.</text>
</comment>
<comment type="domain">
    <text evidence="1">The microtubule tip localization signal (MtLS) motif; mediates interaction with MAPRE1 and targeting to the growing microtubule plus ends.</text>
</comment>
<comment type="domain">
    <text evidence="2">The basic region (residues 2167-2674) mediates the association with both microtubules and actin and promotes the bundling of F-actin.</text>
</comment>
<comment type="PTM">
    <text evidence="1 2">Phosphorylated; phosphorylation enhances the F-actin bundling activity (By similarity). Phosphorylated by GSK3B.</text>
</comment>
<comment type="PTM">
    <text evidence="1">Ubiquitinated, leading to its degradation by the proteasome. Ubiquitination is facilitated by Axin. Deubiquitinated by ZRANB1/TRABID (By similarity).</text>
</comment>
<comment type="similarity">
    <text evidence="10">Belongs to the adenomatous polyposis coli (APC) family.</text>
</comment>
<reference key="1">
    <citation type="journal article" date="1992" name="Science">
        <title>Multiple intestinal neoplasia caused by a mutation in the murine homolog of the APC gene.</title>
        <authorList>
            <person name="Su L.-K."/>
            <person name="Kinzler K.W."/>
            <person name="Vogelstein B."/>
            <person name="Preisinger A.C."/>
            <person name="Moser A.R."/>
            <person name="Luongo C."/>
            <person name="Gould K.A."/>
            <person name="Dove W.F."/>
        </authorList>
    </citation>
    <scope>NUCLEOTIDE SEQUENCE [MRNA] (ISOFORMS 1 AND 2)</scope>
    <scope>VARIANTS</scope>
    <source>
        <strain>C57BL/6J</strain>
        <strain>CAST/EiJ</strain>
        <tissue>Brain</tissue>
    </source>
</reference>
<reference key="2">
    <citation type="journal article" date="1992" name="Science">
        <authorList>
            <person name="Su L.-K."/>
            <person name="Kinzler K.W."/>
            <person name="Vogelstein B."/>
            <person name="Preisinger A.C."/>
            <person name="Moser A.R."/>
            <person name="Luongo C."/>
            <person name="Gould K.A."/>
            <person name="Dove W.F."/>
        </authorList>
    </citation>
    <scope>ERRATUM OF PUBMED:1350108</scope>
</reference>
<reference key="3">
    <citation type="submission" date="1993-10" db="EMBL/GenBank/DDBJ databases">
        <title>The murine APC gene: alternative splicing of 5' untranslated region segments.</title>
        <authorList>
            <person name="Dicker F."/>
            <person name="Lambertz S."/>
            <person name="Reitmair A."/>
            <person name="Ballhausen W.G."/>
        </authorList>
    </citation>
    <scope>NUCLEOTIDE SEQUENCE [GENOMIC DNA] OF 1-45</scope>
    <source>
        <strain>BALB/cJ</strain>
        <tissue>Liver</tissue>
    </source>
</reference>
<reference key="4">
    <citation type="submission" date="2009-01" db="UniProtKB">
        <authorList>
            <person name="Lubec G."/>
            <person name="Sunyer B."/>
            <person name="Chen W.-Q."/>
        </authorList>
    </citation>
    <scope>PROTEIN SEQUENCE OF 1795-1810</scope>
    <scope>IDENTIFICATION BY MASS SPECTROMETRY</scope>
    <source>
        <strain>OF1</strain>
        <tissue>Hippocampus</tissue>
    </source>
</reference>
<reference key="5">
    <citation type="journal article" date="1993" name="Cancer Res.">
        <title>APC gene messenger RNA: novel isoforms that lack exon 7.</title>
        <authorList>
            <person name="Oshima M."/>
            <person name="Sugiyama H."/>
            <person name="Kitagawa K."/>
            <person name="Taketo M."/>
        </authorList>
    </citation>
    <scope>ALTERNATIVE SPLICING</scope>
</reference>
<reference key="6">
    <citation type="journal article" date="2004" name="Nat. Cell Biol.">
        <title>EB1 and APC bind to mDia to stabilize microtubules downstream of Rho and promote cell migration.</title>
        <authorList>
            <person name="Wen Y."/>
            <person name="Eng C.H."/>
            <person name="Schmoranzer J."/>
            <person name="Cabrera-Poch N."/>
            <person name="Morris E.J.S."/>
            <person name="Chen M."/>
            <person name="Wallar B.J."/>
            <person name="Alberts A.S."/>
            <person name="Gundersen G.G."/>
        </authorList>
    </citation>
    <scope>FUNCTION</scope>
    <scope>INTERACTION WITH DIAPH1; DIAPH2 AND MAPRE1</scope>
</reference>
<reference key="7">
    <citation type="journal article" date="2006" name="Genes Cells">
        <title>Human scribble, a novel tumor suppressor identified as a target of high-risk HPV E6 for ubiquitin-mediated degradation, interacts with adenomatous polyposis coli.</title>
        <authorList>
            <person name="Takizawa S."/>
            <person name="Nagasaka K."/>
            <person name="Nakagawa S."/>
            <person name="Yano T."/>
            <person name="Nakagawa K."/>
            <person name="Yasugi T."/>
            <person name="Takeuchi T."/>
            <person name="Kanda T."/>
            <person name="Huibregtse J.M."/>
            <person name="Akiyama T."/>
            <person name="Taketani Y."/>
        </authorList>
    </citation>
    <scope>INTERACTION WITH SCRIB</scope>
</reference>
<reference key="8">
    <citation type="journal article" date="2009" name="EMBO Rep.">
        <title>The adenomatous polyposis coli-associated exchange factors Asef and Asef2 are required for adenoma formation in Apc(Min/+)mice.</title>
        <authorList>
            <person name="Kawasaki Y."/>
            <person name="Tsuji S."/>
            <person name="Muroya K."/>
            <person name="Furukawa S."/>
            <person name="Shibata Y."/>
            <person name="Okuno M."/>
            <person name="Ohwada S."/>
            <person name="Akiyama T."/>
        </authorList>
    </citation>
    <scope>FUNCTION</scope>
</reference>
<reference key="9">
    <citation type="journal article" date="2010" name="Cell">
        <title>A tissue-specific atlas of mouse protein phosphorylation and expression.</title>
        <authorList>
            <person name="Huttlin E.L."/>
            <person name="Jedrychowski M.P."/>
            <person name="Elias J.E."/>
            <person name="Goswami T."/>
            <person name="Rad R."/>
            <person name="Beausoleil S.A."/>
            <person name="Villen J."/>
            <person name="Haas W."/>
            <person name="Sowa M.E."/>
            <person name="Gygi S.P."/>
        </authorList>
    </citation>
    <scope>PHOSPHORYLATION [LARGE SCALE ANALYSIS] AT SER-105; SER-109; SER-778; SER-1036; SER-1370; SER-1391; SER-1394; THR-1437; SER-1772; SER-1859; SER-1862; SER-1969; SER-1971; SER-2125; THR-2151; SER-2674 AND SER-2726</scope>
    <scope>IDENTIFICATION BY MASS SPECTROMETRY [LARGE SCALE ANALYSIS]</scope>
    <source>
        <tissue>Brain</tissue>
        <tissue>Heart</tissue>
        <tissue>Kidney</tissue>
        <tissue>Liver</tissue>
        <tissue>Lung</tissue>
        <tissue>Pancreas</tissue>
        <tissue>Spleen</tissue>
        <tissue>Testis</tissue>
    </source>
</reference>
<protein>
    <recommendedName>
        <fullName>Adenomatous polyposis coli protein</fullName>
        <shortName>Protein APC</shortName>
        <shortName>mAPC</shortName>
    </recommendedName>
</protein>
<organism>
    <name type="scientific">Mus musculus</name>
    <name type="common">Mouse</name>
    <dbReference type="NCBI Taxonomy" id="10090"/>
    <lineage>
        <taxon>Eukaryota</taxon>
        <taxon>Metazoa</taxon>
        <taxon>Chordata</taxon>
        <taxon>Craniata</taxon>
        <taxon>Vertebrata</taxon>
        <taxon>Euteleostomi</taxon>
        <taxon>Mammalia</taxon>
        <taxon>Eutheria</taxon>
        <taxon>Euarchontoglires</taxon>
        <taxon>Glires</taxon>
        <taxon>Rodentia</taxon>
        <taxon>Myomorpha</taxon>
        <taxon>Muroidea</taxon>
        <taxon>Muridae</taxon>
        <taxon>Murinae</taxon>
        <taxon>Mus</taxon>
        <taxon>Mus</taxon>
    </lineage>
</organism>
<evidence type="ECO:0000250" key="1"/>
<evidence type="ECO:0000250" key="2">
    <source>
        <dbReference type="UniProtKB" id="P25054"/>
    </source>
</evidence>
<evidence type="ECO:0000250" key="3">
    <source>
        <dbReference type="UniProtKB" id="P70478"/>
    </source>
</evidence>
<evidence type="ECO:0000255" key="4"/>
<evidence type="ECO:0000256" key="5">
    <source>
        <dbReference type="SAM" id="MobiDB-lite"/>
    </source>
</evidence>
<evidence type="ECO:0000269" key="6">
    <source>
    </source>
</evidence>
<evidence type="ECO:0000269" key="7">
    <source>
    </source>
</evidence>
<evidence type="ECO:0000269" key="8">
    <source>
    </source>
</evidence>
<evidence type="ECO:0000303" key="9">
    <source>
    </source>
</evidence>
<evidence type="ECO:0000305" key="10"/>
<evidence type="ECO:0007744" key="11">
    <source>
    </source>
</evidence>
<keyword id="KW-0002">3D-structure</keyword>
<keyword id="KW-0007">Acetylation</keyword>
<keyword id="KW-0025">Alternative splicing</keyword>
<keyword id="KW-0965">Cell junction</keyword>
<keyword id="KW-1003">Cell membrane</keyword>
<keyword id="KW-0966">Cell projection</keyword>
<keyword id="KW-0175">Coiled coil</keyword>
<keyword id="KW-0963">Cytoplasm</keyword>
<keyword id="KW-0206">Cytoskeleton</keyword>
<keyword id="KW-0903">Direct protein sequencing</keyword>
<keyword id="KW-0472">Membrane</keyword>
<keyword id="KW-0493">Microtubule</keyword>
<keyword id="KW-0597">Phosphoprotein</keyword>
<keyword id="KW-1185">Reference proteome</keyword>
<keyword id="KW-0677">Repeat</keyword>
<keyword id="KW-0043">Tumor suppressor</keyword>
<keyword id="KW-0832">Ubl conjugation</keyword>
<keyword id="KW-0879">Wnt signaling pathway</keyword>
<dbReference type="EMBL" id="M88127">
    <property type="protein sequence ID" value="AAB59632.1"/>
    <property type="molecule type" value="mRNA"/>
</dbReference>
<dbReference type="EMBL" id="U02937">
    <property type="protein sequence ID" value="AAA03443.1"/>
    <property type="molecule type" value="Unassigned_DNA"/>
</dbReference>
<dbReference type="PIR" id="I49505">
    <property type="entry name" value="I49505"/>
</dbReference>
<dbReference type="PDB" id="1VJ6">
    <property type="method" value="NMR"/>
    <property type="chains" value="B=2834-2845"/>
</dbReference>
<dbReference type="PDBsum" id="1VJ6"/>
<dbReference type="SASBDB" id="Q61315"/>
<dbReference type="SMR" id="Q61315"/>
<dbReference type="ComplexPortal" id="CPX-103">
    <property type="entry name" value="Beta-catenin destruction core complex, Apc-Axin1-Gsk3b variant"/>
</dbReference>
<dbReference type="ComplexPortal" id="CPX-449">
    <property type="entry name" value="Beta-catenin destruction core complex, Apc-Axin2-Gsk3b variant"/>
</dbReference>
<dbReference type="ComplexPortal" id="CPX-453">
    <property type="entry name" value="Beta-catenin destruction core complex, Apc-Axin1-Gsk3a variant"/>
</dbReference>
<dbReference type="ComplexPortal" id="CPX-457">
    <property type="entry name" value="Beta-catenin destruction core complex, Apc-Axin2-Gsk3a variant"/>
</dbReference>
<dbReference type="CORUM" id="Q61315"/>
<dbReference type="ELM" id="Q61315"/>
<dbReference type="FunCoup" id="Q61315">
    <property type="interactions" value="677"/>
</dbReference>
<dbReference type="IntAct" id="Q61315">
    <property type="interactions" value="13"/>
</dbReference>
<dbReference type="MINT" id="Q61315"/>
<dbReference type="STRING" id="10090.ENSMUSP00000078337"/>
<dbReference type="GlyGen" id="Q61315">
    <property type="glycosylation" value="11 sites, 4 N-linked glycans (4 sites), 1 O-linked glycan (6 sites)"/>
</dbReference>
<dbReference type="iPTMnet" id="Q61315"/>
<dbReference type="PhosphoSitePlus" id="Q61315"/>
<dbReference type="jPOST" id="Q61315"/>
<dbReference type="PaxDb" id="10090-ENSMUSP00000078337"/>
<dbReference type="PeptideAtlas" id="Q61315"/>
<dbReference type="ProteomicsDB" id="296330">
    <molecule id="Q61315-1"/>
</dbReference>
<dbReference type="ProteomicsDB" id="296331">
    <molecule id="Q61315-2"/>
</dbReference>
<dbReference type="ProteomicsDB" id="296332">
    <molecule id="Q61315-3"/>
</dbReference>
<dbReference type="ProteomicsDB" id="296333">
    <molecule id="Q61315-4"/>
</dbReference>
<dbReference type="Pumba" id="Q61315"/>
<dbReference type="AGR" id="MGI:88039"/>
<dbReference type="MGI" id="MGI:88039">
    <property type="gene designation" value="Apc"/>
</dbReference>
<dbReference type="eggNOG" id="KOG2122">
    <property type="taxonomic scope" value="Eukaryota"/>
</dbReference>
<dbReference type="InParanoid" id="Q61315"/>
<dbReference type="PhylomeDB" id="Q61315"/>
<dbReference type="Reactome" id="R-MMU-111465">
    <property type="pathway name" value="Apoptotic cleavage of cellular proteins"/>
</dbReference>
<dbReference type="Reactome" id="R-MMU-195253">
    <property type="pathway name" value="Degradation of beta-catenin by the destruction complex"/>
</dbReference>
<dbReference type="Reactome" id="R-MMU-196299">
    <property type="pathway name" value="Beta-catenin phosphorylation cascade"/>
</dbReference>
<dbReference type="Reactome" id="R-MMU-3769402">
    <property type="pathway name" value="Deactivation of the beta-catenin transactivating complex"/>
</dbReference>
<dbReference type="Reactome" id="R-MMU-4641262">
    <property type="pathway name" value="Disassembly of the destruction complex and recruitment of AXIN to the membrane"/>
</dbReference>
<dbReference type="Reactome" id="R-MMU-5689896">
    <property type="pathway name" value="Ovarian tumor domain proteases"/>
</dbReference>
<dbReference type="CD-CODE" id="CE726F99">
    <property type="entry name" value="Postsynaptic density"/>
</dbReference>
<dbReference type="ChiTaRS" id="Apc">
    <property type="organism name" value="mouse"/>
</dbReference>
<dbReference type="EvolutionaryTrace" id="Q61315"/>
<dbReference type="PRO" id="PR:Q61315"/>
<dbReference type="Proteomes" id="UP000000589">
    <property type="component" value="Unplaced"/>
</dbReference>
<dbReference type="RNAct" id="Q61315">
    <property type="molecule type" value="protein"/>
</dbReference>
<dbReference type="GO" id="GO:0005912">
    <property type="term" value="C:adherens junction"/>
    <property type="evidence" value="ECO:0007669"/>
    <property type="project" value="UniProtKB-SubCell"/>
</dbReference>
<dbReference type="GO" id="GO:0030424">
    <property type="term" value="C:axon"/>
    <property type="evidence" value="ECO:0000314"/>
    <property type="project" value="MGI"/>
</dbReference>
<dbReference type="GO" id="GO:0044295">
    <property type="term" value="C:axonal growth cone"/>
    <property type="evidence" value="ECO:0000314"/>
    <property type="project" value="MGI"/>
</dbReference>
<dbReference type="GO" id="GO:0030877">
    <property type="term" value="C:beta-catenin destruction complex"/>
    <property type="evidence" value="ECO:0000250"/>
    <property type="project" value="UniProtKB"/>
</dbReference>
<dbReference type="GO" id="GO:0042995">
    <property type="term" value="C:cell projection"/>
    <property type="evidence" value="ECO:0000314"/>
    <property type="project" value="MGI"/>
</dbReference>
<dbReference type="GO" id="GO:0031253">
    <property type="term" value="C:cell projection membrane"/>
    <property type="evidence" value="ECO:0000314"/>
    <property type="project" value="MGI"/>
</dbReference>
<dbReference type="GO" id="GO:0005813">
    <property type="term" value="C:centrosome"/>
    <property type="evidence" value="ECO:0000250"/>
    <property type="project" value="UniProtKB"/>
</dbReference>
<dbReference type="GO" id="GO:0005737">
    <property type="term" value="C:cytoplasm"/>
    <property type="evidence" value="ECO:0000314"/>
    <property type="project" value="CAFA"/>
</dbReference>
<dbReference type="GO" id="GO:0098978">
    <property type="term" value="C:glutamatergic synapse"/>
    <property type="evidence" value="ECO:0000314"/>
    <property type="project" value="SynGO"/>
</dbReference>
<dbReference type="GO" id="GO:0030426">
    <property type="term" value="C:growth cone"/>
    <property type="evidence" value="ECO:0000314"/>
    <property type="project" value="MGI"/>
</dbReference>
<dbReference type="GO" id="GO:0000776">
    <property type="term" value="C:kinetochore"/>
    <property type="evidence" value="ECO:0000250"/>
    <property type="project" value="UniProtKB"/>
</dbReference>
<dbReference type="GO" id="GO:0030027">
    <property type="term" value="C:lamellipodium"/>
    <property type="evidence" value="ECO:0000250"/>
    <property type="project" value="UniProtKB"/>
</dbReference>
<dbReference type="GO" id="GO:0016328">
    <property type="term" value="C:lateral plasma membrane"/>
    <property type="evidence" value="ECO:0000266"/>
    <property type="project" value="MGI"/>
</dbReference>
<dbReference type="GO" id="GO:0005874">
    <property type="term" value="C:microtubule"/>
    <property type="evidence" value="ECO:0007669"/>
    <property type="project" value="UniProtKB-KW"/>
</dbReference>
<dbReference type="GO" id="GO:0015630">
    <property type="term" value="C:microtubule cytoskeleton"/>
    <property type="evidence" value="ECO:0000314"/>
    <property type="project" value="MGI"/>
</dbReference>
<dbReference type="GO" id="GO:0005634">
    <property type="term" value="C:nucleus"/>
    <property type="evidence" value="ECO:0000314"/>
    <property type="project" value="CAFA"/>
</dbReference>
<dbReference type="GO" id="GO:0048471">
    <property type="term" value="C:perinuclear region of cytoplasm"/>
    <property type="evidence" value="ECO:0000266"/>
    <property type="project" value="MGI"/>
</dbReference>
<dbReference type="GO" id="GO:0005886">
    <property type="term" value="C:plasma membrane"/>
    <property type="evidence" value="ECO:0000250"/>
    <property type="project" value="UniProtKB"/>
</dbReference>
<dbReference type="GO" id="GO:0098794">
    <property type="term" value="C:postsynapse"/>
    <property type="evidence" value="ECO:0000314"/>
    <property type="project" value="SynGO"/>
</dbReference>
<dbReference type="GO" id="GO:0032587">
    <property type="term" value="C:ruffle membrane"/>
    <property type="evidence" value="ECO:0000250"/>
    <property type="project" value="UniProtKB"/>
</dbReference>
<dbReference type="GO" id="GO:0034750">
    <property type="term" value="C:Scrib-APC-beta-catenin complex"/>
    <property type="evidence" value="ECO:0000314"/>
    <property type="project" value="BHF-UCL"/>
</dbReference>
<dbReference type="GO" id="GO:0008013">
    <property type="term" value="F:beta-catenin binding"/>
    <property type="evidence" value="ECO:0000314"/>
    <property type="project" value="MGI"/>
</dbReference>
<dbReference type="GO" id="GO:0070840">
    <property type="term" value="F:dynein complex binding"/>
    <property type="evidence" value="ECO:0000353"/>
    <property type="project" value="CAFA"/>
</dbReference>
<dbReference type="GO" id="GO:0008017">
    <property type="term" value="F:microtubule binding"/>
    <property type="evidence" value="ECO:0000250"/>
    <property type="project" value="UniProtKB"/>
</dbReference>
<dbReference type="GO" id="GO:0051010">
    <property type="term" value="F:microtubule plus-end binding"/>
    <property type="evidence" value="ECO:0000314"/>
    <property type="project" value="MGI"/>
</dbReference>
<dbReference type="GO" id="GO:0002020">
    <property type="term" value="F:protease binding"/>
    <property type="evidence" value="ECO:0000353"/>
    <property type="project" value="BHF-UCL"/>
</dbReference>
<dbReference type="GO" id="GO:0019901">
    <property type="term" value="F:protein kinase binding"/>
    <property type="evidence" value="ECO:0000353"/>
    <property type="project" value="CAFA"/>
</dbReference>
<dbReference type="GO" id="GO:0019887">
    <property type="term" value="F:protein kinase regulator activity"/>
    <property type="evidence" value="ECO:0000250"/>
    <property type="project" value="UniProtKB"/>
</dbReference>
<dbReference type="GO" id="GO:0031625">
    <property type="term" value="F:ubiquitin protein ligase binding"/>
    <property type="evidence" value="ECO:0000266"/>
    <property type="project" value="MGI"/>
</dbReference>
<dbReference type="GO" id="GO:1990863">
    <property type="term" value="P:acinar cell proliferation"/>
    <property type="evidence" value="ECO:0000315"/>
    <property type="project" value="MGI"/>
</dbReference>
<dbReference type="GO" id="GO:0009952">
    <property type="term" value="P:anterior/posterior pattern specification"/>
    <property type="evidence" value="ECO:0000315"/>
    <property type="project" value="MGI"/>
</dbReference>
<dbReference type="GO" id="GO:0006915">
    <property type="term" value="P:apoptotic process"/>
    <property type="evidence" value="ECO:0000315"/>
    <property type="project" value="MGI"/>
</dbReference>
<dbReference type="GO" id="GO:0009798">
    <property type="term" value="P:axis specification"/>
    <property type="evidence" value="ECO:0000315"/>
    <property type="project" value="MGI"/>
</dbReference>
<dbReference type="GO" id="GO:0007409">
    <property type="term" value="P:axonogenesis"/>
    <property type="evidence" value="ECO:0000315"/>
    <property type="project" value="MGI"/>
</dbReference>
<dbReference type="GO" id="GO:0060070">
    <property type="term" value="P:canonical Wnt signaling pathway"/>
    <property type="evidence" value="ECO:0000315"/>
    <property type="project" value="MGI"/>
</dbReference>
<dbReference type="GO" id="GO:0044336">
    <property type="term" value="P:canonical Wnt signaling pathway involved in negative regulation of apoptotic process"/>
    <property type="evidence" value="ECO:0000316"/>
    <property type="project" value="MGI"/>
</dbReference>
<dbReference type="GO" id="GO:0044337">
    <property type="term" value="P:canonical Wnt signaling pathway involved in positive regulation of apoptotic process"/>
    <property type="evidence" value="ECO:0000316"/>
    <property type="project" value="MGI"/>
</dbReference>
<dbReference type="GO" id="GO:0007155">
    <property type="term" value="P:cell adhesion"/>
    <property type="evidence" value="ECO:0000315"/>
    <property type="project" value="MGI"/>
</dbReference>
<dbReference type="GO" id="GO:0051301">
    <property type="term" value="P:cell division"/>
    <property type="evidence" value="ECO:0000315"/>
    <property type="project" value="MGI"/>
</dbReference>
<dbReference type="GO" id="GO:0016477">
    <property type="term" value="P:cell migration"/>
    <property type="evidence" value="ECO:0000315"/>
    <property type="project" value="MGI"/>
</dbReference>
<dbReference type="GO" id="GO:0008283">
    <property type="term" value="P:cell population proliferation"/>
    <property type="evidence" value="ECO:0000315"/>
    <property type="project" value="MGI"/>
</dbReference>
<dbReference type="GO" id="GO:0051276">
    <property type="term" value="P:chromosome organization"/>
    <property type="evidence" value="ECO:0000315"/>
    <property type="project" value="MGI"/>
</dbReference>
<dbReference type="GO" id="GO:0031122">
    <property type="term" value="P:cytoplasmic microtubule organization"/>
    <property type="evidence" value="ECO:0000316"/>
    <property type="project" value="MGI"/>
</dbReference>
<dbReference type="GO" id="GO:0006974">
    <property type="term" value="P:DNA damage response"/>
    <property type="evidence" value="ECO:0000250"/>
    <property type="project" value="UniProtKB"/>
</dbReference>
<dbReference type="GO" id="GO:0009953">
    <property type="term" value="P:dorsal/ventral pattern formation"/>
    <property type="evidence" value="ECO:0000315"/>
    <property type="project" value="MGI"/>
</dbReference>
<dbReference type="GO" id="GO:0001935">
    <property type="term" value="P:endothelial cell proliferation"/>
    <property type="evidence" value="ECO:0000315"/>
    <property type="project" value="MGI"/>
</dbReference>
<dbReference type="GO" id="GO:1904019">
    <property type="term" value="P:epithelial cell apoptotic process"/>
    <property type="evidence" value="ECO:0000315"/>
    <property type="project" value="MGI"/>
</dbReference>
<dbReference type="GO" id="GO:0050673">
    <property type="term" value="P:epithelial cell proliferation"/>
    <property type="evidence" value="ECO:0000315"/>
    <property type="project" value="MGI"/>
</dbReference>
<dbReference type="GO" id="GO:0060767">
    <property type="term" value="P:epithelial cell proliferation involved in prostate gland development"/>
    <property type="evidence" value="ECO:0000315"/>
    <property type="project" value="MGI"/>
</dbReference>
<dbReference type="GO" id="GO:0044346">
    <property type="term" value="P:fibroblast apoptotic process"/>
    <property type="evidence" value="ECO:0000315"/>
    <property type="project" value="MGI"/>
</dbReference>
<dbReference type="GO" id="GO:0010761">
    <property type="term" value="P:fibroblast migration"/>
    <property type="evidence" value="ECO:0000315"/>
    <property type="project" value="MGI"/>
</dbReference>
<dbReference type="GO" id="GO:0001942">
    <property type="term" value="P:hair follicle development"/>
    <property type="evidence" value="ECO:0000315"/>
    <property type="project" value="MGI"/>
</dbReference>
<dbReference type="GO" id="GO:0008286">
    <property type="term" value="P:insulin receptor signaling pathway"/>
    <property type="evidence" value="ECO:0000315"/>
    <property type="project" value="CAFA"/>
</dbReference>
<dbReference type="GO" id="GO:0001822">
    <property type="term" value="P:kidney development"/>
    <property type="evidence" value="ECO:0000315"/>
    <property type="project" value="MGI"/>
</dbReference>
<dbReference type="GO" id="GO:0000165">
    <property type="term" value="P:MAPK cascade"/>
    <property type="evidence" value="ECO:0000315"/>
    <property type="project" value="MGI"/>
</dbReference>
<dbReference type="GO" id="GO:0007091">
    <property type="term" value="P:metaphase/anaphase transition of mitotic cell cycle"/>
    <property type="evidence" value="ECO:0000315"/>
    <property type="project" value="MGI"/>
</dbReference>
<dbReference type="GO" id="GO:0007019">
    <property type="term" value="P:microtubule depolymerization"/>
    <property type="evidence" value="ECO:0000315"/>
    <property type="project" value="MGI"/>
</dbReference>
<dbReference type="GO" id="GO:0046785">
    <property type="term" value="P:microtubule polymerization"/>
    <property type="evidence" value="ECO:0000315"/>
    <property type="project" value="MGI"/>
</dbReference>
<dbReference type="GO" id="GO:0000281">
    <property type="term" value="P:mitotic cytokinesis"/>
    <property type="evidence" value="ECO:0000315"/>
    <property type="project" value="MGI"/>
</dbReference>
<dbReference type="GO" id="GO:0007094">
    <property type="term" value="P:mitotic spindle assembly checkpoint signaling"/>
    <property type="evidence" value="ECO:0000266"/>
    <property type="project" value="MGI"/>
</dbReference>
<dbReference type="GO" id="GO:0046716">
    <property type="term" value="P:muscle cell cellular homeostasis"/>
    <property type="evidence" value="ECO:0000316"/>
    <property type="project" value="MGI"/>
</dbReference>
<dbReference type="GO" id="GO:1904698">
    <property type="term" value="P:negative regulation of acinar cell proliferation"/>
    <property type="evidence" value="ECO:0000315"/>
    <property type="project" value="MGI"/>
</dbReference>
<dbReference type="GO" id="GO:0043066">
    <property type="term" value="P:negative regulation of apoptotic process"/>
    <property type="evidence" value="ECO:0000315"/>
    <property type="project" value="MGI"/>
</dbReference>
<dbReference type="GO" id="GO:0090090">
    <property type="term" value="P:negative regulation of canonical Wnt signaling pathway"/>
    <property type="evidence" value="ECO:0000315"/>
    <property type="project" value="MGI"/>
</dbReference>
<dbReference type="GO" id="GO:1902807">
    <property type="term" value="P:negative regulation of cell cycle G1/S phase transition"/>
    <property type="evidence" value="ECO:0000250"/>
    <property type="project" value="UniProtKB"/>
</dbReference>
<dbReference type="GO" id="GO:0008285">
    <property type="term" value="P:negative regulation of cell population proliferation"/>
    <property type="evidence" value="ECO:0000315"/>
    <property type="project" value="MGI"/>
</dbReference>
<dbReference type="GO" id="GO:0045736">
    <property type="term" value="P:negative regulation of cyclin-dependent protein serine/threonine kinase activity"/>
    <property type="evidence" value="ECO:0000250"/>
    <property type="project" value="UniProtKB"/>
</dbReference>
<dbReference type="GO" id="GO:0001937">
    <property type="term" value="P:negative regulation of endothelial cell proliferation"/>
    <property type="evidence" value="ECO:0000315"/>
    <property type="project" value="MGI"/>
</dbReference>
<dbReference type="GO" id="GO:1904036">
    <property type="term" value="P:negative regulation of epithelial cell apoptotic process"/>
    <property type="evidence" value="ECO:0000315"/>
    <property type="project" value="MGI"/>
</dbReference>
<dbReference type="GO" id="GO:0050680">
    <property type="term" value="P:negative regulation of epithelial cell proliferation"/>
    <property type="evidence" value="ECO:0000315"/>
    <property type="project" value="MGI"/>
</dbReference>
<dbReference type="GO" id="GO:0060770">
    <property type="term" value="P:negative regulation of epithelial cell proliferation involved in prostate gland development"/>
    <property type="evidence" value="ECO:0000315"/>
    <property type="project" value="MGI"/>
</dbReference>
<dbReference type="GO" id="GO:0043409">
    <property type="term" value="P:negative regulation of MAPK cascade"/>
    <property type="evidence" value="ECO:0000315"/>
    <property type="project" value="MGI"/>
</dbReference>
<dbReference type="GO" id="GO:0007026">
    <property type="term" value="P:negative regulation of microtubule depolymerization"/>
    <property type="evidence" value="ECO:0000315"/>
    <property type="project" value="MGI"/>
</dbReference>
<dbReference type="GO" id="GO:0042483">
    <property type="term" value="P:negative regulation of odontogenesis"/>
    <property type="evidence" value="ECO:0000315"/>
    <property type="project" value="MGI"/>
</dbReference>
<dbReference type="GO" id="GO:0030178">
    <property type="term" value="P:negative regulation of Wnt signaling pathway"/>
    <property type="evidence" value="ECO:0000315"/>
    <property type="project" value="MGI"/>
</dbReference>
<dbReference type="GO" id="GO:0071941">
    <property type="term" value="P:nitrogen cycle metabolic process"/>
    <property type="evidence" value="ECO:0000315"/>
    <property type="project" value="MGI"/>
</dbReference>
<dbReference type="GO" id="GO:0042476">
    <property type="term" value="P:odontogenesis"/>
    <property type="evidence" value="ECO:0000315"/>
    <property type="project" value="MGI"/>
</dbReference>
<dbReference type="GO" id="GO:0007389">
    <property type="term" value="P:pattern specification process"/>
    <property type="evidence" value="ECO:0000315"/>
    <property type="project" value="MGI"/>
</dbReference>
<dbReference type="GO" id="GO:0043065">
    <property type="term" value="P:positive regulation of apoptotic process"/>
    <property type="evidence" value="ECO:0000266"/>
    <property type="project" value="MGI"/>
</dbReference>
<dbReference type="GO" id="GO:0045785">
    <property type="term" value="P:positive regulation of cell adhesion"/>
    <property type="evidence" value="ECO:0000315"/>
    <property type="project" value="MGI"/>
</dbReference>
<dbReference type="GO" id="GO:0045597">
    <property type="term" value="P:positive regulation of cell differentiation"/>
    <property type="evidence" value="ECO:0000315"/>
    <property type="project" value="MGI"/>
</dbReference>
<dbReference type="GO" id="GO:0051781">
    <property type="term" value="P:positive regulation of cell division"/>
    <property type="evidence" value="ECO:0000315"/>
    <property type="project" value="MGI"/>
</dbReference>
<dbReference type="GO" id="GO:0030335">
    <property type="term" value="P:positive regulation of cell migration"/>
    <property type="evidence" value="ECO:0000266"/>
    <property type="project" value="MGI"/>
</dbReference>
<dbReference type="GO" id="GO:0120162">
    <property type="term" value="P:positive regulation of cold-induced thermogenesis"/>
    <property type="evidence" value="ECO:0000315"/>
    <property type="project" value="YuBioLab"/>
</dbReference>
<dbReference type="GO" id="GO:2000271">
    <property type="term" value="P:positive regulation of fibroblast apoptotic process"/>
    <property type="evidence" value="ECO:0000315"/>
    <property type="project" value="MGI"/>
</dbReference>
<dbReference type="GO" id="GO:0010763">
    <property type="term" value="P:positive regulation of fibroblast migration"/>
    <property type="evidence" value="ECO:0000315"/>
    <property type="project" value="MGI"/>
</dbReference>
<dbReference type="GO" id="GO:0031116">
    <property type="term" value="P:positive regulation of microtubule polymerization"/>
    <property type="evidence" value="ECO:0000315"/>
    <property type="project" value="MGI"/>
</dbReference>
<dbReference type="GO" id="GO:0045732">
    <property type="term" value="P:positive regulation of protein catabolic process"/>
    <property type="evidence" value="ECO:0000315"/>
    <property type="project" value="MGI"/>
</dbReference>
<dbReference type="GO" id="GO:1904781">
    <property type="term" value="P:positive regulation of protein localization to centrosome"/>
    <property type="evidence" value="ECO:0000315"/>
    <property type="project" value="CAFA"/>
</dbReference>
<dbReference type="GO" id="GO:0031274">
    <property type="term" value="P:positive regulation of pseudopodium assembly"/>
    <property type="evidence" value="ECO:0000266"/>
    <property type="project" value="MGI"/>
</dbReference>
<dbReference type="GO" id="GO:0043161">
    <property type="term" value="P:proteasome-mediated ubiquitin-dependent protein catabolic process"/>
    <property type="evidence" value="ECO:0000303"/>
    <property type="project" value="ComplexPortal"/>
</dbReference>
<dbReference type="GO" id="GO:0030163">
    <property type="term" value="P:protein catabolic process"/>
    <property type="evidence" value="ECO:0000315"/>
    <property type="project" value="MGI"/>
</dbReference>
<dbReference type="GO" id="GO:0065003">
    <property type="term" value="P:protein-containing complex assembly"/>
    <property type="evidence" value="ECO:0000250"/>
    <property type="project" value="UniProtKB"/>
</dbReference>
<dbReference type="GO" id="GO:0009954">
    <property type="term" value="P:proximal/distal pattern formation"/>
    <property type="evidence" value="ECO:0000315"/>
    <property type="project" value="MGI"/>
</dbReference>
<dbReference type="GO" id="GO:0051988">
    <property type="term" value="P:regulation of attachment of spindle microtubules to kinetochore"/>
    <property type="evidence" value="ECO:0000315"/>
    <property type="project" value="MGI"/>
</dbReference>
<dbReference type="GO" id="GO:0051726">
    <property type="term" value="P:regulation of cell cycle"/>
    <property type="evidence" value="ECO:0000315"/>
    <property type="project" value="MGI"/>
</dbReference>
<dbReference type="GO" id="GO:0045595">
    <property type="term" value="P:regulation of cell differentiation"/>
    <property type="evidence" value="ECO:0000316"/>
    <property type="project" value="MGI"/>
</dbReference>
<dbReference type="GO" id="GO:0030334">
    <property type="term" value="P:regulation of cell migration"/>
    <property type="evidence" value="ECO:0000316"/>
    <property type="project" value="MGI"/>
</dbReference>
<dbReference type="GO" id="GO:0030856">
    <property type="term" value="P:regulation of epithelial cell differentiation"/>
    <property type="evidence" value="ECO:0000315"/>
    <property type="project" value="MGI"/>
</dbReference>
<dbReference type="GO" id="GO:0010632">
    <property type="term" value="P:regulation of epithelial cell migration"/>
    <property type="evidence" value="ECO:0000315"/>
    <property type="project" value="MGI"/>
</dbReference>
<dbReference type="GO" id="GO:0032886">
    <property type="term" value="P:regulation of microtubule-based process"/>
    <property type="evidence" value="ECO:0000250"/>
    <property type="project" value="UniProtKB"/>
</dbReference>
<dbReference type="GO" id="GO:0045667">
    <property type="term" value="P:regulation of osteoblast differentiation"/>
    <property type="evidence" value="ECO:0000315"/>
    <property type="project" value="MGI"/>
</dbReference>
<dbReference type="GO" id="GO:0045670">
    <property type="term" value="P:regulation of osteoclast differentiation"/>
    <property type="evidence" value="ECO:0000315"/>
    <property type="project" value="MGI"/>
</dbReference>
<dbReference type="GO" id="GO:0060041">
    <property type="term" value="P:retina development in camera-type eye"/>
    <property type="evidence" value="ECO:0000315"/>
    <property type="project" value="MGI"/>
</dbReference>
<dbReference type="GO" id="GO:0043588">
    <property type="term" value="P:skin development"/>
    <property type="evidence" value="ECO:0000315"/>
    <property type="project" value="MGI"/>
</dbReference>
<dbReference type="GO" id="GO:0035019">
    <property type="term" value="P:somatic stem cell population maintenance"/>
    <property type="evidence" value="ECO:0000315"/>
    <property type="project" value="MGI"/>
</dbReference>
<dbReference type="GO" id="GO:0019827">
    <property type="term" value="P:stem cell population maintenance"/>
    <property type="evidence" value="ECO:0000315"/>
    <property type="project" value="MGI"/>
</dbReference>
<dbReference type="GO" id="GO:0033077">
    <property type="term" value="P:T cell differentiation in thymus"/>
    <property type="evidence" value="ECO:0000315"/>
    <property type="project" value="MGI"/>
</dbReference>
<dbReference type="GO" id="GO:0048538">
    <property type="term" value="P:thymus development"/>
    <property type="evidence" value="ECO:0000315"/>
    <property type="project" value="MGI"/>
</dbReference>
<dbReference type="GO" id="GO:0016055">
    <property type="term" value="P:Wnt signaling pathway"/>
    <property type="evidence" value="ECO:0000314"/>
    <property type="project" value="MGI"/>
</dbReference>
<dbReference type="FunFam" id="1.25.10.10:FF:000035">
    <property type="entry name" value="adenomatous polyposis coli protein 2"/>
    <property type="match status" value="1"/>
</dbReference>
<dbReference type="FunFam" id="1.10.287.450:FF:000001">
    <property type="entry name" value="adenomatous polyposis coli protein isoform X1"/>
    <property type="match status" value="1"/>
</dbReference>
<dbReference type="Gene3D" id="1.20.5.10">
    <property type="match status" value="1"/>
</dbReference>
<dbReference type="Gene3D" id="1.10.287.450">
    <property type="entry name" value="Helix hairpin bin"/>
    <property type="match status" value="1"/>
</dbReference>
<dbReference type="Gene3D" id="1.25.10.10">
    <property type="entry name" value="Leucine-rich Repeat Variant"/>
    <property type="match status" value="1"/>
</dbReference>
<dbReference type="InterPro" id="IPR009240">
    <property type="entry name" value="APC_15aa_rpt"/>
</dbReference>
<dbReference type="InterPro" id="IPR009234">
    <property type="entry name" value="APC_basic_dom"/>
</dbReference>
<dbReference type="InterPro" id="IPR026831">
    <property type="entry name" value="APC_dom"/>
</dbReference>
<dbReference type="InterPro" id="IPR026818">
    <property type="entry name" value="Apc_fam"/>
</dbReference>
<dbReference type="InterPro" id="IPR032038">
    <property type="entry name" value="APC_N"/>
</dbReference>
<dbReference type="InterPro" id="IPR036149">
    <property type="entry name" value="APC_N_sf"/>
</dbReference>
<dbReference type="InterPro" id="IPR041257">
    <property type="entry name" value="APC_rep"/>
</dbReference>
<dbReference type="InterPro" id="IPR009223">
    <property type="entry name" value="APC_rpt"/>
</dbReference>
<dbReference type="InterPro" id="IPR011989">
    <property type="entry name" value="ARM-like"/>
</dbReference>
<dbReference type="InterPro" id="IPR016024">
    <property type="entry name" value="ARM-type_fold"/>
</dbReference>
<dbReference type="InterPro" id="IPR000225">
    <property type="entry name" value="Armadillo"/>
</dbReference>
<dbReference type="InterPro" id="IPR009232">
    <property type="entry name" value="EB1-bd"/>
</dbReference>
<dbReference type="InterPro" id="IPR009224">
    <property type="entry name" value="SAMP"/>
</dbReference>
<dbReference type="PANTHER" id="PTHR12607:SF11">
    <property type="entry name" value="ADENOMATOUS POLYPOSIS COLI PROTEIN"/>
    <property type="match status" value="1"/>
</dbReference>
<dbReference type="PANTHER" id="PTHR12607">
    <property type="entry name" value="ADENOMATOUS POLYPOSIS COLI PROTEIN FAMILY"/>
    <property type="match status" value="1"/>
</dbReference>
<dbReference type="Pfam" id="PF05972">
    <property type="entry name" value="APC_15aa"/>
    <property type="match status" value="4"/>
</dbReference>
<dbReference type="Pfam" id="PF05956">
    <property type="entry name" value="APC_basic"/>
    <property type="match status" value="1"/>
</dbReference>
<dbReference type="Pfam" id="PF16689">
    <property type="entry name" value="APC_N_CC"/>
    <property type="match status" value="1"/>
</dbReference>
<dbReference type="Pfam" id="PF05923">
    <property type="entry name" value="APC_r"/>
    <property type="match status" value="7"/>
</dbReference>
<dbReference type="Pfam" id="PF18797">
    <property type="entry name" value="APC_rep"/>
    <property type="match status" value="1"/>
</dbReference>
<dbReference type="Pfam" id="PF16634">
    <property type="entry name" value="APC_u13"/>
    <property type="match status" value="1"/>
</dbReference>
<dbReference type="Pfam" id="PF16635">
    <property type="entry name" value="APC_u14"/>
    <property type="match status" value="1"/>
</dbReference>
<dbReference type="Pfam" id="PF16636">
    <property type="entry name" value="APC_u15"/>
    <property type="match status" value="1"/>
</dbReference>
<dbReference type="Pfam" id="PF16630">
    <property type="entry name" value="APC_u5"/>
    <property type="match status" value="1"/>
</dbReference>
<dbReference type="Pfam" id="PF16633">
    <property type="entry name" value="APC_u9"/>
    <property type="match status" value="1"/>
</dbReference>
<dbReference type="Pfam" id="PF00514">
    <property type="entry name" value="Arm"/>
    <property type="match status" value="3"/>
</dbReference>
<dbReference type="Pfam" id="PF16629">
    <property type="entry name" value="Arm_APC_u3"/>
    <property type="match status" value="1"/>
</dbReference>
<dbReference type="Pfam" id="PF05937">
    <property type="entry name" value="EB1_binding"/>
    <property type="match status" value="1"/>
</dbReference>
<dbReference type="Pfam" id="PF05924">
    <property type="entry name" value="SAMP"/>
    <property type="match status" value="3"/>
</dbReference>
<dbReference type="Pfam" id="PF11414">
    <property type="entry name" value="Suppressor_APC"/>
    <property type="match status" value="1"/>
</dbReference>
<dbReference type="SMART" id="SM00185">
    <property type="entry name" value="ARM"/>
    <property type="match status" value="7"/>
</dbReference>
<dbReference type="SUPFAM" id="SSF48371">
    <property type="entry name" value="ARM repeat"/>
    <property type="match status" value="1"/>
</dbReference>
<dbReference type="SUPFAM" id="SSF58050">
    <property type="entry name" value="N-terminal coiled coil domain from apc"/>
    <property type="match status" value="1"/>
</dbReference>
<dbReference type="SUPFAM" id="SSF82931">
    <property type="entry name" value="Tumor suppressor gene product Apc"/>
    <property type="match status" value="1"/>
</dbReference>
<dbReference type="PROSITE" id="PS50176">
    <property type="entry name" value="ARM_REPEAT"/>
    <property type="match status" value="1"/>
</dbReference>
<accession>Q61315</accession>
<accession>Q62044</accession>
<proteinExistence type="evidence at protein level"/>